<sequence>MDKKLLAILACPVCKGDLKYDREKQELVCKNDGMAFPIRDGIPVMLEKEARTLTTDERLG</sequence>
<organism>
    <name type="scientific">Hahella chejuensis (strain KCTC 2396)</name>
    <dbReference type="NCBI Taxonomy" id="349521"/>
    <lineage>
        <taxon>Bacteria</taxon>
        <taxon>Pseudomonadati</taxon>
        <taxon>Pseudomonadota</taxon>
        <taxon>Gammaproteobacteria</taxon>
        <taxon>Oceanospirillales</taxon>
        <taxon>Hahellaceae</taxon>
        <taxon>Hahella</taxon>
    </lineage>
</organism>
<keyword id="KW-1185">Reference proteome</keyword>
<accession>Q2SIN3</accession>
<proteinExistence type="inferred from homology"/>
<protein>
    <recommendedName>
        <fullName evidence="1">UPF0434 protein HCH_02705</fullName>
    </recommendedName>
</protein>
<reference key="1">
    <citation type="journal article" date="2005" name="Nucleic Acids Res.">
        <title>Genomic blueprint of Hahella chejuensis, a marine microbe producing an algicidal agent.</title>
        <authorList>
            <person name="Jeong H."/>
            <person name="Yim J.H."/>
            <person name="Lee C."/>
            <person name="Choi S.-H."/>
            <person name="Park Y.K."/>
            <person name="Yoon S.H."/>
            <person name="Hur C.-G."/>
            <person name="Kang H.-Y."/>
            <person name="Kim D."/>
            <person name="Lee H.H."/>
            <person name="Park K.H."/>
            <person name="Park S.-H."/>
            <person name="Park H.-S."/>
            <person name="Lee H.K."/>
            <person name="Oh T.K."/>
            <person name="Kim J.F."/>
        </authorList>
    </citation>
    <scope>NUCLEOTIDE SEQUENCE [LARGE SCALE GENOMIC DNA]</scope>
    <source>
        <strain>KCTC 2396</strain>
    </source>
</reference>
<gene>
    <name type="ordered locus">HCH_02705</name>
</gene>
<feature type="chain" id="PRO_0000291100" description="UPF0434 protein HCH_02705">
    <location>
        <begin position="1"/>
        <end position="60"/>
    </location>
</feature>
<comment type="similarity">
    <text evidence="1">Belongs to the UPF0434 family.</text>
</comment>
<evidence type="ECO:0000255" key="1">
    <source>
        <dbReference type="HAMAP-Rule" id="MF_01187"/>
    </source>
</evidence>
<name>Y2705_HAHCH</name>
<dbReference type="EMBL" id="CP000155">
    <property type="protein sequence ID" value="ABC29491.1"/>
    <property type="molecule type" value="Genomic_DNA"/>
</dbReference>
<dbReference type="RefSeq" id="WP_011396560.1">
    <property type="nucleotide sequence ID" value="NC_007645.1"/>
</dbReference>
<dbReference type="SMR" id="Q2SIN3"/>
<dbReference type="STRING" id="349521.HCH_02705"/>
<dbReference type="KEGG" id="hch:HCH_02705"/>
<dbReference type="eggNOG" id="COG2835">
    <property type="taxonomic scope" value="Bacteria"/>
</dbReference>
<dbReference type="HOGENOM" id="CLU_155659_3_1_6"/>
<dbReference type="OrthoDB" id="9812205at2"/>
<dbReference type="Proteomes" id="UP000000238">
    <property type="component" value="Chromosome"/>
</dbReference>
<dbReference type="GO" id="GO:0005829">
    <property type="term" value="C:cytosol"/>
    <property type="evidence" value="ECO:0007669"/>
    <property type="project" value="TreeGrafter"/>
</dbReference>
<dbReference type="FunFam" id="2.20.25.10:FF:000002">
    <property type="entry name" value="UPF0434 protein YcaR"/>
    <property type="match status" value="1"/>
</dbReference>
<dbReference type="Gene3D" id="2.20.25.10">
    <property type="match status" value="1"/>
</dbReference>
<dbReference type="HAMAP" id="MF_01187">
    <property type="entry name" value="UPF0434"/>
    <property type="match status" value="1"/>
</dbReference>
<dbReference type="InterPro" id="IPR005651">
    <property type="entry name" value="Trm112-like"/>
</dbReference>
<dbReference type="PANTHER" id="PTHR33505:SF4">
    <property type="entry name" value="PROTEIN PREY, MITOCHONDRIAL"/>
    <property type="match status" value="1"/>
</dbReference>
<dbReference type="PANTHER" id="PTHR33505">
    <property type="entry name" value="ZGC:162634"/>
    <property type="match status" value="1"/>
</dbReference>
<dbReference type="Pfam" id="PF03966">
    <property type="entry name" value="Trm112p"/>
    <property type="match status" value="1"/>
</dbReference>
<dbReference type="SUPFAM" id="SSF158997">
    <property type="entry name" value="Trm112p-like"/>
    <property type="match status" value="1"/>
</dbReference>